<gene>
    <name evidence="1" type="primary">rplB</name>
    <name type="ordered locus">EcolC_0396</name>
</gene>
<evidence type="ECO:0000255" key="1">
    <source>
        <dbReference type="HAMAP-Rule" id="MF_01320"/>
    </source>
</evidence>
<evidence type="ECO:0000256" key="2">
    <source>
        <dbReference type="SAM" id="MobiDB-lite"/>
    </source>
</evidence>
<evidence type="ECO:0000305" key="3"/>
<dbReference type="EMBL" id="CP000946">
    <property type="protein sequence ID" value="ACA76074.1"/>
    <property type="molecule type" value="Genomic_DNA"/>
</dbReference>
<dbReference type="RefSeq" id="WP_000301864.1">
    <property type="nucleotide sequence ID" value="NZ_MTFT01000014.1"/>
</dbReference>
<dbReference type="SMR" id="B1IPY2"/>
<dbReference type="GeneID" id="93778670"/>
<dbReference type="KEGG" id="ecl:EcolC_0396"/>
<dbReference type="HOGENOM" id="CLU_036235_2_1_6"/>
<dbReference type="GO" id="GO:0005829">
    <property type="term" value="C:cytosol"/>
    <property type="evidence" value="ECO:0007669"/>
    <property type="project" value="UniProtKB-ARBA"/>
</dbReference>
<dbReference type="GO" id="GO:0015934">
    <property type="term" value="C:large ribosomal subunit"/>
    <property type="evidence" value="ECO:0007669"/>
    <property type="project" value="InterPro"/>
</dbReference>
<dbReference type="GO" id="GO:0019843">
    <property type="term" value="F:rRNA binding"/>
    <property type="evidence" value="ECO:0007669"/>
    <property type="project" value="UniProtKB-UniRule"/>
</dbReference>
<dbReference type="GO" id="GO:0003735">
    <property type="term" value="F:structural constituent of ribosome"/>
    <property type="evidence" value="ECO:0007669"/>
    <property type="project" value="InterPro"/>
</dbReference>
<dbReference type="GO" id="GO:0016740">
    <property type="term" value="F:transferase activity"/>
    <property type="evidence" value="ECO:0007669"/>
    <property type="project" value="InterPro"/>
</dbReference>
<dbReference type="GO" id="GO:0002181">
    <property type="term" value="P:cytoplasmic translation"/>
    <property type="evidence" value="ECO:0007669"/>
    <property type="project" value="TreeGrafter"/>
</dbReference>
<dbReference type="FunFam" id="2.30.30.30:FF:000001">
    <property type="entry name" value="50S ribosomal protein L2"/>
    <property type="match status" value="1"/>
</dbReference>
<dbReference type="FunFam" id="2.40.50.140:FF:000003">
    <property type="entry name" value="50S ribosomal protein L2"/>
    <property type="match status" value="1"/>
</dbReference>
<dbReference type="FunFam" id="4.10.950.10:FF:000001">
    <property type="entry name" value="50S ribosomal protein L2"/>
    <property type="match status" value="1"/>
</dbReference>
<dbReference type="Gene3D" id="2.30.30.30">
    <property type="match status" value="1"/>
</dbReference>
<dbReference type="Gene3D" id="2.40.50.140">
    <property type="entry name" value="Nucleic acid-binding proteins"/>
    <property type="match status" value="1"/>
</dbReference>
<dbReference type="Gene3D" id="4.10.950.10">
    <property type="entry name" value="Ribosomal protein L2, domain 3"/>
    <property type="match status" value="1"/>
</dbReference>
<dbReference type="HAMAP" id="MF_01320_B">
    <property type="entry name" value="Ribosomal_uL2_B"/>
    <property type="match status" value="1"/>
</dbReference>
<dbReference type="InterPro" id="IPR012340">
    <property type="entry name" value="NA-bd_OB-fold"/>
</dbReference>
<dbReference type="InterPro" id="IPR014722">
    <property type="entry name" value="Rib_uL2_dom2"/>
</dbReference>
<dbReference type="InterPro" id="IPR002171">
    <property type="entry name" value="Ribosomal_uL2"/>
</dbReference>
<dbReference type="InterPro" id="IPR005880">
    <property type="entry name" value="Ribosomal_uL2_bac/org-type"/>
</dbReference>
<dbReference type="InterPro" id="IPR022669">
    <property type="entry name" value="Ribosomal_uL2_C"/>
</dbReference>
<dbReference type="InterPro" id="IPR022671">
    <property type="entry name" value="Ribosomal_uL2_CS"/>
</dbReference>
<dbReference type="InterPro" id="IPR014726">
    <property type="entry name" value="Ribosomal_uL2_dom3"/>
</dbReference>
<dbReference type="InterPro" id="IPR022666">
    <property type="entry name" value="Ribosomal_uL2_RNA-bd_dom"/>
</dbReference>
<dbReference type="InterPro" id="IPR008991">
    <property type="entry name" value="Translation_prot_SH3-like_sf"/>
</dbReference>
<dbReference type="NCBIfam" id="TIGR01171">
    <property type="entry name" value="rplB_bact"/>
    <property type="match status" value="1"/>
</dbReference>
<dbReference type="PANTHER" id="PTHR13691:SF5">
    <property type="entry name" value="LARGE RIBOSOMAL SUBUNIT PROTEIN UL2M"/>
    <property type="match status" value="1"/>
</dbReference>
<dbReference type="PANTHER" id="PTHR13691">
    <property type="entry name" value="RIBOSOMAL PROTEIN L2"/>
    <property type="match status" value="1"/>
</dbReference>
<dbReference type="Pfam" id="PF00181">
    <property type="entry name" value="Ribosomal_L2"/>
    <property type="match status" value="1"/>
</dbReference>
<dbReference type="Pfam" id="PF03947">
    <property type="entry name" value="Ribosomal_L2_C"/>
    <property type="match status" value="1"/>
</dbReference>
<dbReference type="PIRSF" id="PIRSF002158">
    <property type="entry name" value="Ribosomal_L2"/>
    <property type="match status" value="1"/>
</dbReference>
<dbReference type="SMART" id="SM01383">
    <property type="entry name" value="Ribosomal_L2"/>
    <property type="match status" value="1"/>
</dbReference>
<dbReference type="SMART" id="SM01382">
    <property type="entry name" value="Ribosomal_L2_C"/>
    <property type="match status" value="1"/>
</dbReference>
<dbReference type="SUPFAM" id="SSF50249">
    <property type="entry name" value="Nucleic acid-binding proteins"/>
    <property type="match status" value="1"/>
</dbReference>
<dbReference type="SUPFAM" id="SSF50104">
    <property type="entry name" value="Translation proteins SH3-like domain"/>
    <property type="match status" value="1"/>
</dbReference>
<dbReference type="PROSITE" id="PS00467">
    <property type="entry name" value="RIBOSOMAL_L2"/>
    <property type="match status" value="1"/>
</dbReference>
<comment type="function">
    <text evidence="1">One of the primary rRNA binding proteins. Required for association of the 30S and 50S subunits to form the 70S ribosome, for tRNA binding and peptide bond formation. It has been suggested to have peptidyltransferase activity; this is somewhat controversial. Makes several contacts with the 16S rRNA in the 70S ribosome.</text>
</comment>
<comment type="subunit">
    <text evidence="1">Part of the 50S ribosomal subunit. Forms a bridge to the 30S subunit in the 70S ribosome.</text>
</comment>
<comment type="similarity">
    <text evidence="1">Belongs to the universal ribosomal protein uL2 family.</text>
</comment>
<name>RL2_ECOLC</name>
<keyword id="KW-0007">Acetylation</keyword>
<keyword id="KW-0687">Ribonucleoprotein</keyword>
<keyword id="KW-0689">Ribosomal protein</keyword>
<keyword id="KW-0694">RNA-binding</keyword>
<keyword id="KW-0699">rRNA-binding</keyword>
<feature type="chain" id="PRO_1000086329" description="Large ribosomal subunit protein uL2">
    <location>
        <begin position="1"/>
        <end position="273"/>
    </location>
</feature>
<feature type="region of interest" description="Disordered" evidence="2">
    <location>
        <begin position="28"/>
        <end position="53"/>
    </location>
</feature>
<feature type="region of interest" description="Disordered" evidence="2">
    <location>
        <begin position="221"/>
        <end position="273"/>
    </location>
</feature>
<feature type="compositionally biased region" description="Low complexity" evidence="2">
    <location>
        <begin position="39"/>
        <end position="48"/>
    </location>
</feature>
<feature type="modified residue" description="N6-acetyllysine" evidence="1">
    <location>
        <position position="242"/>
    </location>
</feature>
<reference key="1">
    <citation type="submission" date="2008-02" db="EMBL/GenBank/DDBJ databases">
        <title>Complete sequence of Escherichia coli C str. ATCC 8739.</title>
        <authorList>
            <person name="Copeland A."/>
            <person name="Lucas S."/>
            <person name="Lapidus A."/>
            <person name="Glavina del Rio T."/>
            <person name="Dalin E."/>
            <person name="Tice H."/>
            <person name="Bruce D."/>
            <person name="Goodwin L."/>
            <person name="Pitluck S."/>
            <person name="Kiss H."/>
            <person name="Brettin T."/>
            <person name="Detter J.C."/>
            <person name="Han C."/>
            <person name="Kuske C.R."/>
            <person name="Schmutz J."/>
            <person name="Larimer F."/>
            <person name="Land M."/>
            <person name="Hauser L."/>
            <person name="Kyrpides N."/>
            <person name="Mikhailova N."/>
            <person name="Ingram L."/>
            <person name="Richardson P."/>
        </authorList>
    </citation>
    <scope>NUCLEOTIDE SEQUENCE [LARGE SCALE GENOMIC DNA]</scope>
    <source>
        <strain>ATCC 8739 / DSM 1576 / NBRC 3972 / NCIMB 8545 / WDCM 00012 / Crooks</strain>
    </source>
</reference>
<protein>
    <recommendedName>
        <fullName evidence="1">Large ribosomal subunit protein uL2</fullName>
    </recommendedName>
    <alternativeName>
        <fullName evidence="3">50S ribosomal protein L2</fullName>
    </alternativeName>
</protein>
<sequence length="273" mass="29860">MAVVKCKPTSPGRRHVVKVVNPELHKGKPFAPLLEKNSKSGGRNNNGRITTRHIGGGHKQAYRIVDFKRNKDGIPAVVERLEYDPNRSANIALVLYKDGERRYILAPKGLKAGDQIQSGVDAAIKPGNTLPMRNIPVGSTVHNVEMKPGKGGQLARSAGTYVQIVARDGAYVTLRLRSGEMRKVEADCRATLGEVGNAEHMLRVLGKAGAARWRGVRPTVRGTAMNPVDHPHGGGEGRNFGKHPVTPWGVQTKGKKTRSNKRTDKFIVRRRSK</sequence>
<organism>
    <name type="scientific">Escherichia coli (strain ATCC 8739 / DSM 1576 / NBRC 3972 / NCIMB 8545 / WDCM 00012 / Crooks)</name>
    <dbReference type="NCBI Taxonomy" id="481805"/>
    <lineage>
        <taxon>Bacteria</taxon>
        <taxon>Pseudomonadati</taxon>
        <taxon>Pseudomonadota</taxon>
        <taxon>Gammaproteobacteria</taxon>
        <taxon>Enterobacterales</taxon>
        <taxon>Enterobacteriaceae</taxon>
        <taxon>Escherichia</taxon>
    </lineage>
</organism>
<accession>B1IPY2</accession>
<proteinExistence type="inferred from homology"/>